<feature type="chain" id="PRO_1000144059" description="Large ribosomal subunit protein uL6">
    <location>
        <begin position="1"/>
        <end position="180"/>
    </location>
</feature>
<dbReference type="EMBL" id="CP000951">
    <property type="protein sequence ID" value="ACA99053.1"/>
    <property type="molecule type" value="Genomic_DNA"/>
</dbReference>
<dbReference type="RefSeq" id="WP_012306676.1">
    <property type="nucleotide sequence ID" value="NZ_JAHHPU010000001.1"/>
</dbReference>
<dbReference type="SMR" id="B1XJJ3"/>
<dbReference type="STRING" id="32049.SYNPCC7002_A1051"/>
<dbReference type="KEGG" id="syp:SYNPCC7002_A1051"/>
<dbReference type="eggNOG" id="COG0097">
    <property type="taxonomic scope" value="Bacteria"/>
</dbReference>
<dbReference type="HOGENOM" id="CLU_065464_1_2_3"/>
<dbReference type="Proteomes" id="UP000001688">
    <property type="component" value="Chromosome"/>
</dbReference>
<dbReference type="GO" id="GO:0022625">
    <property type="term" value="C:cytosolic large ribosomal subunit"/>
    <property type="evidence" value="ECO:0007669"/>
    <property type="project" value="TreeGrafter"/>
</dbReference>
<dbReference type="GO" id="GO:0019843">
    <property type="term" value="F:rRNA binding"/>
    <property type="evidence" value="ECO:0007669"/>
    <property type="project" value="UniProtKB-UniRule"/>
</dbReference>
<dbReference type="GO" id="GO:0003735">
    <property type="term" value="F:structural constituent of ribosome"/>
    <property type="evidence" value="ECO:0007669"/>
    <property type="project" value="InterPro"/>
</dbReference>
<dbReference type="GO" id="GO:0002181">
    <property type="term" value="P:cytoplasmic translation"/>
    <property type="evidence" value="ECO:0007669"/>
    <property type="project" value="TreeGrafter"/>
</dbReference>
<dbReference type="FunFam" id="3.90.930.12:FF:000001">
    <property type="entry name" value="50S ribosomal protein L6"/>
    <property type="match status" value="1"/>
</dbReference>
<dbReference type="FunFam" id="3.90.930.12:FF:000002">
    <property type="entry name" value="50S ribosomal protein L6"/>
    <property type="match status" value="1"/>
</dbReference>
<dbReference type="Gene3D" id="3.90.930.12">
    <property type="entry name" value="Ribosomal protein L6, alpha-beta domain"/>
    <property type="match status" value="2"/>
</dbReference>
<dbReference type="HAMAP" id="MF_01365_B">
    <property type="entry name" value="Ribosomal_uL6_B"/>
    <property type="match status" value="1"/>
</dbReference>
<dbReference type="InterPro" id="IPR000702">
    <property type="entry name" value="Ribosomal_uL6-like"/>
</dbReference>
<dbReference type="InterPro" id="IPR036789">
    <property type="entry name" value="Ribosomal_uL6-like_a/b-dom_sf"/>
</dbReference>
<dbReference type="InterPro" id="IPR020040">
    <property type="entry name" value="Ribosomal_uL6_a/b-dom"/>
</dbReference>
<dbReference type="InterPro" id="IPR019906">
    <property type="entry name" value="Ribosomal_uL6_bac-type"/>
</dbReference>
<dbReference type="InterPro" id="IPR002358">
    <property type="entry name" value="Ribosomal_uL6_CS"/>
</dbReference>
<dbReference type="NCBIfam" id="TIGR03654">
    <property type="entry name" value="L6_bact"/>
    <property type="match status" value="1"/>
</dbReference>
<dbReference type="PANTHER" id="PTHR11655">
    <property type="entry name" value="60S/50S RIBOSOMAL PROTEIN L6/L9"/>
    <property type="match status" value="1"/>
</dbReference>
<dbReference type="PANTHER" id="PTHR11655:SF14">
    <property type="entry name" value="LARGE RIBOSOMAL SUBUNIT PROTEIN UL6M"/>
    <property type="match status" value="1"/>
</dbReference>
<dbReference type="Pfam" id="PF00347">
    <property type="entry name" value="Ribosomal_L6"/>
    <property type="match status" value="2"/>
</dbReference>
<dbReference type="PIRSF" id="PIRSF002162">
    <property type="entry name" value="Ribosomal_L6"/>
    <property type="match status" value="1"/>
</dbReference>
<dbReference type="PRINTS" id="PR00059">
    <property type="entry name" value="RIBOSOMALL6"/>
</dbReference>
<dbReference type="SUPFAM" id="SSF56053">
    <property type="entry name" value="Ribosomal protein L6"/>
    <property type="match status" value="2"/>
</dbReference>
<dbReference type="PROSITE" id="PS00525">
    <property type="entry name" value="RIBOSOMAL_L6_1"/>
    <property type="match status" value="1"/>
</dbReference>
<name>RL6_PICP2</name>
<evidence type="ECO:0000255" key="1">
    <source>
        <dbReference type="HAMAP-Rule" id="MF_01365"/>
    </source>
</evidence>
<evidence type="ECO:0000305" key="2"/>
<gene>
    <name evidence="1" type="primary">rplF</name>
    <name evidence="1" type="synonym">rpl6</name>
    <name type="ordered locus">SYNPCC7002_A1051</name>
</gene>
<accession>B1XJJ3</accession>
<keyword id="KW-1185">Reference proteome</keyword>
<keyword id="KW-0687">Ribonucleoprotein</keyword>
<keyword id="KW-0689">Ribosomal protein</keyword>
<keyword id="KW-0694">RNA-binding</keyword>
<keyword id="KW-0699">rRNA-binding</keyword>
<protein>
    <recommendedName>
        <fullName evidence="1">Large ribosomal subunit protein uL6</fullName>
    </recommendedName>
    <alternativeName>
        <fullName evidence="2">50S ribosomal protein L6</fullName>
    </alternativeName>
</protein>
<organism>
    <name type="scientific">Picosynechococcus sp. (strain ATCC 27264 / PCC 7002 / PR-6)</name>
    <name type="common">Agmenellum quadruplicatum</name>
    <dbReference type="NCBI Taxonomy" id="32049"/>
    <lineage>
        <taxon>Bacteria</taxon>
        <taxon>Bacillati</taxon>
        <taxon>Cyanobacteriota</taxon>
        <taxon>Cyanophyceae</taxon>
        <taxon>Oscillatoriophycideae</taxon>
        <taxon>Chroococcales</taxon>
        <taxon>Geminocystaceae</taxon>
        <taxon>Picosynechococcus</taxon>
    </lineage>
</organism>
<comment type="function">
    <text evidence="1">This protein binds to the 23S rRNA, and is important in its secondary structure. It is located near the subunit interface in the base of the L7/L12 stalk, and near the tRNA binding site of the peptidyltransferase center.</text>
</comment>
<comment type="subunit">
    <text evidence="1">Part of the 50S ribosomal subunit.</text>
</comment>
<comment type="similarity">
    <text evidence="1">Belongs to the universal ribosomal protein uL6 family.</text>
</comment>
<reference key="1">
    <citation type="submission" date="2008-02" db="EMBL/GenBank/DDBJ databases">
        <title>Complete sequence of Synechococcus sp. PCC 7002.</title>
        <authorList>
            <person name="Li T."/>
            <person name="Zhao J."/>
            <person name="Zhao C."/>
            <person name="Liu Z."/>
            <person name="Zhao F."/>
            <person name="Marquardt J."/>
            <person name="Nomura C.T."/>
            <person name="Persson S."/>
            <person name="Detter J.C."/>
            <person name="Richardson P.M."/>
            <person name="Lanz C."/>
            <person name="Schuster S.C."/>
            <person name="Wang J."/>
            <person name="Li S."/>
            <person name="Huang X."/>
            <person name="Cai T."/>
            <person name="Yu Z."/>
            <person name="Luo J."/>
            <person name="Zhao J."/>
            <person name="Bryant D.A."/>
        </authorList>
    </citation>
    <scope>NUCLEOTIDE SEQUENCE [LARGE SCALE GENOMIC DNA]</scope>
    <source>
        <strain>ATCC 27264 / PCC 7002 / PR-6</strain>
    </source>
</reference>
<sequence length="180" mass="19454">MSRIGKKPIPIPDKVTVTLNGANVAVKGPKGSLERTLPEKVTVTQEDNTIVVSPVDNSRTARERHGLCRTLVANMIEGVSQGYSKQLEIIGVGYRAQVQGNKLTLNVGYSKPVEMQMPEGVTAAMGEKNTQVIISGIDKEVVGNTAAKVRAVRPPEPYKGKGIRYQGEYIRRKAGKAGKK</sequence>
<proteinExistence type="inferred from homology"/>